<proteinExistence type="predicted"/>
<name>YOT2_CAEEL</name>
<gene>
    <name type="ORF">ZK632.2</name>
</gene>
<dbReference type="EMBL" id="Z22181">
    <property type="protein sequence ID" value="CAA80179.1"/>
    <property type="molecule type" value="Genomic_DNA"/>
</dbReference>
<dbReference type="PIR" id="S40934">
    <property type="entry name" value="S40934"/>
</dbReference>
<dbReference type="RefSeq" id="NP_499172.1">
    <property type="nucleotide sequence ID" value="NM_066771.7"/>
</dbReference>
<dbReference type="SMR" id="P34648"/>
<dbReference type="BioGRID" id="41580">
    <property type="interactions" value="6"/>
</dbReference>
<dbReference type="DIP" id="DIP-25310N"/>
<dbReference type="FunCoup" id="P34648">
    <property type="interactions" value="2681"/>
</dbReference>
<dbReference type="IntAct" id="P34648">
    <property type="interactions" value="2"/>
</dbReference>
<dbReference type="STRING" id="6239.ZK632.2.1"/>
<dbReference type="PaxDb" id="6239-ZK632.2"/>
<dbReference type="PeptideAtlas" id="P34648"/>
<dbReference type="EnsemblMetazoa" id="ZK632.2.1">
    <property type="protein sequence ID" value="ZK632.2.1"/>
    <property type="gene ID" value="WBGene00014011"/>
</dbReference>
<dbReference type="GeneID" id="176386"/>
<dbReference type="KEGG" id="cel:CELE_ZK632.2"/>
<dbReference type="UCSC" id="ZK632.2">
    <property type="organism name" value="c. elegans"/>
</dbReference>
<dbReference type="AGR" id="WB:WBGene00014011"/>
<dbReference type="CTD" id="176386"/>
<dbReference type="WormBase" id="ZK632.2">
    <property type="protein sequence ID" value="CE00419"/>
    <property type="gene ID" value="WBGene00014011"/>
</dbReference>
<dbReference type="eggNOG" id="KOG1881">
    <property type="taxonomic scope" value="Eukaryota"/>
</dbReference>
<dbReference type="GeneTree" id="ENSGT00940000155320"/>
<dbReference type="HOGENOM" id="CLU_015909_0_1_1"/>
<dbReference type="InParanoid" id="P34648"/>
<dbReference type="OMA" id="GWHIFEL"/>
<dbReference type="OrthoDB" id="433755at2759"/>
<dbReference type="PhylomeDB" id="P34648"/>
<dbReference type="PRO" id="PR:P34648"/>
<dbReference type="Proteomes" id="UP000001940">
    <property type="component" value="Chromosome III"/>
</dbReference>
<dbReference type="Bgee" id="WBGene00014011">
    <property type="expression patterns" value="Expressed in germ line (C elegans) and 4 other cell types or tissues"/>
</dbReference>
<dbReference type="GO" id="GO:0003729">
    <property type="term" value="F:mRNA binding"/>
    <property type="evidence" value="ECO:0000318"/>
    <property type="project" value="GO_Central"/>
</dbReference>
<dbReference type="CDD" id="cd19856">
    <property type="entry name" value="DSRM_Kanadaptin"/>
    <property type="match status" value="1"/>
</dbReference>
<dbReference type="CDD" id="cd22677">
    <property type="entry name" value="FHA_Kanadaptin"/>
    <property type="match status" value="1"/>
</dbReference>
<dbReference type="FunFam" id="2.60.200.20:FF:000054">
    <property type="entry name" value="Putative coiled-coil proteincoiled-coil protein"/>
    <property type="match status" value="1"/>
</dbReference>
<dbReference type="FunFam" id="3.30.160.20:FF:000088">
    <property type="entry name" value="Uncharacterized protein ZK632.2"/>
    <property type="match status" value="1"/>
</dbReference>
<dbReference type="Gene3D" id="2.60.200.20">
    <property type="match status" value="1"/>
</dbReference>
<dbReference type="Gene3D" id="3.30.160.20">
    <property type="match status" value="1"/>
</dbReference>
<dbReference type="InterPro" id="IPR050923">
    <property type="entry name" value="Cell_Proc_Reg/RNA_Proc"/>
</dbReference>
<dbReference type="InterPro" id="IPR014720">
    <property type="entry name" value="dsRBD_dom"/>
</dbReference>
<dbReference type="InterPro" id="IPR000253">
    <property type="entry name" value="FHA_dom"/>
</dbReference>
<dbReference type="InterPro" id="IPR008984">
    <property type="entry name" value="SMAD_FHA_dom_sf"/>
</dbReference>
<dbReference type="PANTHER" id="PTHR23308">
    <property type="entry name" value="NUCLEAR INHIBITOR OF PROTEIN PHOSPHATASE-1"/>
    <property type="match status" value="1"/>
</dbReference>
<dbReference type="Pfam" id="PF00035">
    <property type="entry name" value="dsrm"/>
    <property type="match status" value="1"/>
</dbReference>
<dbReference type="Pfam" id="PF00498">
    <property type="entry name" value="FHA"/>
    <property type="match status" value="1"/>
</dbReference>
<dbReference type="SMART" id="SM00358">
    <property type="entry name" value="DSRM"/>
    <property type="match status" value="1"/>
</dbReference>
<dbReference type="SMART" id="SM00240">
    <property type="entry name" value="FHA"/>
    <property type="match status" value="1"/>
</dbReference>
<dbReference type="SUPFAM" id="SSF54768">
    <property type="entry name" value="dsRNA-binding domain-like"/>
    <property type="match status" value="1"/>
</dbReference>
<dbReference type="SUPFAM" id="SSF49879">
    <property type="entry name" value="SMAD/FHA domain"/>
    <property type="match status" value="1"/>
</dbReference>
<dbReference type="PROSITE" id="PS50137">
    <property type="entry name" value="DS_RBD"/>
    <property type="match status" value="1"/>
</dbReference>
<dbReference type="PROSITE" id="PS50006">
    <property type="entry name" value="FHA_DOMAIN"/>
    <property type="match status" value="1"/>
</dbReference>
<accession>P34648</accession>
<protein>
    <recommendedName>
        <fullName>Uncharacterized protein ZK632.2</fullName>
    </recommendedName>
</protein>
<reference key="1">
    <citation type="journal article" date="1994" name="Nature">
        <title>2.2 Mb of contiguous nucleotide sequence from chromosome III of C. elegans.</title>
        <authorList>
            <person name="Wilson R."/>
            <person name="Ainscough R."/>
            <person name="Anderson K."/>
            <person name="Baynes C."/>
            <person name="Berks M."/>
            <person name="Bonfield J."/>
            <person name="Burton J."/>
            <person name="Connell M."/>
            <person name="Copsey T."/>
            <person name="Cooper J."/>
            <person name="Coulson A."/>
            <person name="Craxton M."/>
            <person name="Dear S."/>
            <person name="Du Z."/>
            <person name="Durbin R."/>
            <person name="Favello A."/>
            <person name="Fraser A."/>
            <person name="Fulton L."/>
            <person name="Gardner A."/>
            <person name="Green P."/>
            <person name="Hawkins T."/>
            <person name="Hillier L."/>
            <person name="Jier M."/>
            <person name="Johnston L."/>
            <person name="Jones M."/>
            <person name="Kershaw J."/>
            <person name="Kirsten J."/>
            <person name="Laisster N."/>
            <person name="Latreille P."/>
            <person name="Lightning J."/>
            <person name="Lloyd C."/>
            <person name="Mortimore B."/>
            <person name="O'Callaghan M."/>
            <person name="Parsons J."/>
            <person name="Percy C."/>
            <person name="Rifken L."/>
            <person name="Roopra A."/>
            <person name="Saunders D."/>
            <person name="Shownkeen R."/>
            <person name="Sims M."/>
            <person name="Smaldon N."/>
            <person name="Smith A."/>
            <person name="Smith M."/>
            <person name="Sonnhammer E."/>
            <person name="Staden R."/>
            <person name="Sulston J."/>
            <person name="Thierry-Mieg J."/>
            <person name="Thomas K."/>
            <person name="Vaudin M."/>
            <person name="Vaughan K."/>
            <person name="Waterston R."/>
            <person name="Watson A."/>
            <person name="Weinstock L."/>
            <person name="Wilkinson-Sproat J."/>
            <person name="Wohldman P."/>
        </authorList>
    </citation>
    <scope>NUCLEOTIDE SEQUENCE [LARGE SCALE GENOMIC DNA]</scope>
    <source>
        <strain>Bristol N2</strain>
    </source>
</reference>
<reference key="2">
    <citation type="journal article" date="1998" name="Science">
        <title>Genome sequence of the nematode C. elegans: a platform for investigating biology.</title>
        <authorList>
            <consortium name="The C. elegans sequencing consortium"/>
        </authorList>
    </citation>
    <scope>NUCLEOTIDE SEQUENCE [LARGE SCALE GENOMIC DNA]</scope>
    <source>
        <strain>Bristol N2</strain>
    </source>
</reference>
<organism>
    <name type="scientific">Caenorhabditis elegans</name>
    <dbReference type="NCBI Taxonomy" id="6239"/>
    <lineage>
        <taxon>Eukaryota</taxon>
        <taxon>Metazoa</taxon>
        <taxon>Ecdysozoa</taxon>
        <taxon>Nematoda</taxon>
        <taxon>Chromadorea</taxon>
        <taxon>Rhabditida</taxon>
        <taxon>Rhabditina</taxon>
        <taxon>Rhabditomorpha</taxon>
        <taxon>Rhabditoidea</taxon>
        <taxon>Rhabditidae</taxon>
        <taxon>Peloderinae</taxon>
        <taxon>Caenorhabditis</taxon>
    </lineage>
</organism>
<feature type="chain" id="PRO_0000065522" description="Uncharacterized protein ZK632.2">
    <location>
        <begin position="1"/>
        <end position="710"/>
    </location>
</feature>
<feature type="domain" description="FHA" evidence="2">
    <location>
        <begin position="108"/>
        <end position="165"/>
    </location>
</feature>
<feature type="region of interest" description="Disordered" evidence="3">
    <location>
        <begin position="1"/>
        <end position="40"/>
    </location>
</feature>
<feature type="region of interest" description="Disordered" evidence="3">
    <location>
        <begin position="230"/>
        <end position="250"/>
    </location>
</feature>
<feature type="region of interest" description="Disordered" evidence="3">
    <location>
        <begin position="535"/>
        <end position="560"/>
    </location>
</feature>
<feature type="region of interest" description="Disordered" evidence="3">
    <location>
        <begin position="591"/>
        <end position="619"/>
    </location>
</feature>
<feature type="region of interest" description="Disordered" evidence="3">
    <location>
        <begin position="671"/>
        <end position="710"/>
    </location>
</feature>
<feature type="coiled-coil region" evidence="1">
    <location>
        <begin position="206"/>
        <end position="240"/>
    </location>
</feature>
<feature type="coiled-coil region" evidence="1">
    <location>
        <begin position="409"/>
        <end position="440"/>
    </location>
</feature>
<feature type="coiled-coil region" evidence="1">
    <location>
        <begin position="471"/>
        <end position="502"/>
    </location>
</feature>
<feature type="coiled-coil region" evidence="1">
    <location>
        <begin position="613"/>
        <end position="661"/>
    </location>
</feature>
<feature type="compositionally biased region" description="Low complexity" evidence="3">
    <location>
        <begin position="15"/>
        <end position="25"/>
    </location>
</feature>
<feature type="compositionally biased region" description="Polar residues" evidence="3">
    <location>
        <begin position="538"/>
        <end position="560"/>
    </location>
</feature>
<keyword id="KW-0175">Coiled coil</keyword>
<keyword id="KW-1185">Reference proteome</keyword>
<evidence type="ECO:0000255" key="1"/>
<evidence type="ECO:0000255" key="2">
    <source>
        <dbReference type="PROSITE-ProRule" id="PRU00086"/>
    </source>
</evidence>
<evidence type="ECO:0000256" key="3">
    <source>
        <dbReference type="SAM" id="MobiDB-lite"/>
    </source>
</evidence>
<sequence length="710" mass="80515">MSESDGAFKSPSLPPSHHAPAPMSPEKIRAPAEQMDGPVEGVIDEIETAEVQAEKESKISVQAPALHYEVPPWACEPDPAHKFQFEILKEGKLIASYDLSNRKNSTFVVIGRIKPGCDLLMEHPSISRYHCILQYGNDKMSKTGKGWHIFELGSTHGSRMNKKRLPPKQYIRTRVGFIFQFGESTRILNFVGPEEDSEPEWDCSPTEMKLRKHKKELEAKLRAAAAQEMIDDEKREKEEEGCGWGMDYGEDEKPLTTVETDAHLMEDREAYYNQDPKKALQKFFEREGFDMNFEFSEQGQGHTHKWVCSIELPVEIDGVDRAFTASATVSTSKKDAQIQCALDACRILDTYNVLRKSNTKLRMQRKTLEANDYYDEDDDLYLDRTGQLEKQREKRKQWAEEGFGHKRTETDTYESLCRKLEESKKEIIECQKHLDELSAGTKKSRTIDQGGDVLDDYIRQLEKSGGAGDDAKTKMEKSKWRQKLMAATHESQKLEKLVKIAKPAVVKGLEQLETTAANDRQAFLKKLMGVRARKEIDQTPSQGPGPSTSATLPATVAPTSTKAVEVEHEKKMTPLKVEKEIAASLDSSEIKNSLPAVDEPSSVKDEVSEETPQKEAFGSKVQKRVAQWEEELEAEKEELAKKQKLEAEEEAKKKVQRVRRRDIEKKIAGSEDYGAGVEDRDEKYSTWMPPNADQSEAKQDALRAKFAGRY</sequence>